<name>DAPF_ECOSM</name>
<accession>B1LLY0</accession>
<gene>
    <name evidence="1" type="primary">dapF</name>
    <name type="ordered locus">EcSMS35_4175</name>
</gene>
<reference key="1">
    <citation type="journal article" date="2008" name="J. Bacteriol.">
        <title>Insights into the environmental resistance gene pool from the genome sequence of the multidrug-resistant environmental isolate Escherichia coli SMS-3-5.</title>
        <authorList>
            <person name="Fricke W.F."/>
            <person name="Wright M.S."/>
            <person name="Lindell A.H."/>
            <person name="Harkins D.M."/>
            <person name="Baker-Austin C."/>
            <person name="Ravel J."/>
            <person name="Stepanauskas R."/>
        </authorList>
    </citation>
    <scope>NUCLEOTIDE SEQUENCE [LARGE SCALE GENOMIC DNA]</scope>
    <source>
        <strain>SMS-3-5 / SECEC</strain>
    </source>
</reference>
<dbReference type="EC" id="5.1.1.7" evidence="1"/>
<dbReference type="EMBL" id="CP000970">
    <property type="protein sequence ID" value="ACB19831.1"/>
    <property type="molecule type" value="Genomic_DNA"/>
</dbReference>
<dbReference type="RefSeq" id="WP_001160654.1">
    <property type="nucleotide sequence ID" value="NC_010498.1"/>
</dbReference>
<dbReference type="SMR" id="B1LLY0"/>
<dbReference type="GeneID" id="93778134"/>
<dbReference type="KEGG" id="ecm:EcSMS35_4175"/>
<dbReference type="HOGENOM" id="CLU_053306_1_1_6"/>
<dbReference type="UniPathway" id="UPA00034">
    <property type="reaction ID" value="UER00025"/>
</dbReference>
<dbReference type="Proteomes" id="UP000007011">
    <property type="component" value="Chromosome"/>
</dbReference>
<dbReference type="GO" id="GO:0005829">
    <property type="term" value="C:cytosol"/>
    <property type="evidence" value="ECO:0007669"/>
    <property type="project" value="TreeGrafter"/>
</dbReference>
<dbReference type="GO" id="GO:0008837">
    <property type="term" value="F:diaminopimelate epimerase activity"/>
    <property type="evidence" value="ECO:0007669"/>
    <property type="project" value="UniProtKB-UniRule"/>
</dbReference>
<dbReference type="GO" id="GO:0009089">
    <property type="term" value="P:lysine biosynthetic process via diaminopimelate"/>
    <property type="evidence" value="ECO:0007669"/>
    <property type="project" value="UniProtKB-UniRule"/>
</dbReference>
<dbReference type="FunFam" id="3.10.310.10:FF:000001">
    <property type="entry name" value="Diaminopimelate epimerase"/>
    <property type="match status" value="1"/>
</dbReference>
<dbReference type="FunFam" id="3.10.310.10:FF:000002">
    <property type="entry name" value="Diaminopimelate epimerase"/>
    <property type="match status" value="1"/>
</dbReference>
<dbReference type="Gene3D" id="3.10.310.10">
    <property type="entry name" value="Diaminopimelate Epimerase, Chain A, domain 1"/>
    <property type="match status" value="2"/>
</dbReference>
<dbReference type="HAMAP" id="MF_00197">
    <property type="entry name" value="DAP_epimerase"/>
    <property type="match status" value="1"/>
</dbReference>
<dbReference type="InterPro" id="IPR018510">
    <property type="entry name" value="DAP_epimerase_AS"/>
</dbReference>
<dbReference type="InterPro" id="IPR001653">
    <property type="entry name" value="DAP_epimerase_DapF"/>
</dbReference>
<dbReference type="NCBIfam" id="TIGR00652">
    <property type="entry name" value="DapF"/>
    <property type="match status" value="1"/>
</dbReference>
<dbReference type="PANTHER" id="PTHR31689:SF0">
    <property type="entry name" value="DIAMINOPIMELATE EPIMERASE"/>
    <property type="match status" value="1"/>
</dbReference>
<dbReference type="PANTHER" id="PTHR31689">
    <property type="entry name" value="DIAMINOPIMELATE EPIMERASE, CHLOROPLASTIC"/>
    <property type="match status" value="1"/>
</dbReference>
<dbReference type="Pfam" id="PF01678">
    <property type="entry name" value="DAP_epimerase"/>
    <property type="match status" value="2"/>
</dbReference>
<dbReference type="SUPFAM" id="SSF54506">
    <property type="entry name" value="Diaminopimelate epimerase-like"/>
    <property type="match status" value="1"/>
</dbReference>
<dbReference type="PROSITE" id="PS01326">
    <property type="entry name" value="DAP_EPIMERASE"/>
    <property type="match status" value="1"/>
</dbReference>
<feature type="chain" id="PRO_1000118671" description="Diaminopimelate epimerase">
    <location>
        <begin position="1"/>
        <end position="274"/>
    </location>
</feature>
<feature type="active site" description="Proton donor" evidence="1">
    <location>
        <position position="73"/>
    </location>
</feature>
<feature type="active site" description="Proton acceptor" evidence="1">
    <location>
        <position position="217"/>
    </location>
</feature>
<feature type="binding site" evidence="1">
    <location>
        <position position="11"/>
    </location>
    <ligand>
        <name>substrate</name>
    </ligand>
</feature>
<feature type="binding site" evidence="1">
    <location>
        <position position="44"/>
    </location>
    <ligand>
        <name>substrate</name>
    </ligand>
</feature>
<feature type="binding site" evidence="1">
    <location>
        <position position="64"/>
    </location>
    <ligand>
        <name>substrate</name>
    </ligand>
</feature>
<feature type="binding site" evidence="1">
    <location>
        <begin position="74"/>
        <end position="75"/>
    </location>
    <ligand>
        <name>substrate</name>
    </ligand>
</feature>
<feature type="binding site" evidence="1">
    <location>
        <position position="157"/>
    </location>
    <ligand>
        <name>substrate</name>
    </ligand>
</feature>
<feature type="binding site" evidence="1">
    <location>
        <position position="190"/>
    </location>
    <ligand>
        <name>substrate</name>
    </ligand>
</feature>
<feature type="binding site" evidence="1">
    <location>
        <begin position="208"/>
        <end position="209"/>
    </location>
    <ligand>
        <name>substrate</name>
    </ligand>
</feature>
<feature type="binding site" evidence="1">
    <location>
        <begin position="218"/>
        <end position="219"/>
    </location>
    <ligand>
        <name>substrate</name>
    </ligand>
</feature>
<feature type="site" description="Could be important to modulate the pK values of the two catalytic cysteine residues" evidence="1">
    <location>
        <position position="159"/>
    </location>
</feature>
<feature type="site" description="Could be important to modulate the pK values of the two catalytic cysteine residues" evidence="1">
    <location>
        <position position="208"/>
    </location>
</feature>
<feature type="site" description="Important for dimerization" evidence="1">
    <location>
        <position position="268"/>
    </location>
</feature>
<proteinExistence type="inferred from homology"/>
<protein>
    <recommendedName>
        <fullName evidence="1">Diaminopimelate epimerase</fullName>
        <shortName evidence="1">DAP epimerase</shortName>
        <ecNumber evidence="1">5.1.1.7</ecNumber>
    </recommendedName>
    <alternativeName>
        <fullName evidence="1">PLP-independent amino acid racemase</fullName>
    </alternativeName>
</protein>
<evidence type="ECO:0000255" key="1">
    <source>
        <dbReference type="HAMAP-Rule" id="MF_00197"/>
    </source>
</evidence>
<organism>
    <name type="scientific">Escherichia coli (strain SMS-3-5 / SECEC)</name>
    <dbReference type="NCBI Taxonomy" id="439855"/>
    <lineage>
        <taxon>Bacteria</taxon>
        <taxon>Pseudomonadati</taxon>
        <taxon>Pseudomonadota</taxon>
        <taxon>Gammaproteobacteria</taxon>
        <taxon>Enterobacterales</taxon>
        <taxon>Enterobacteriaceae</taxon>
        <taxon>Escherichia</taxon>
    </lineage>
</organism>
<comment type="function">
    <text evidence="1">Catalyzes the stereoinversion of LL-2,6-diaminopimelate (L,L-DAP) to meso-diaminopimelate (meso-DAP), a precursor of L-lysine and an essential component of the bacterial peptidoglycan.</text>
</comment>
<comment type="catalytic activity">
    <reaction evidence="1">
        <text>(2S,6S)-2,6-diaminopimelate = meso-2,6-diaminopimelate</text>
        <dbReference type="Rhea" id="RHEA:15393"/>
        <dbReference type="ChEBI" id="CHEBI:57609"/>
        <dbReference type="ChEBI" id="CHEBI:57791"/>
        <dbReference type="EC" id="5.1.1.7"/>
    </reaction>
</comment>
<comment type="pathway">
    <text evidence="1">Amino-acid biosynthesis; L-lysine biosynthesis via DAP pathway; DL-2,6-diaminopimelate from LL-2,6-diaminopimelate: step 1/1.</text>
</comment>
<comment type="subunit">
    <text evidence="1">Homodimer.</text>
</comment>
<comment type="subcellular location">
    <subcellularLocation>
        <location evidence="1">Cytoplasm</location>
    </subcellularLocation>
</comment>
<comment type="similarity">
    <text evidence="1">Belongs to the diaminopimelate epimerase family.</text>
</comment>
<sequence length="274" mass="30209">MQFSKMHGLGNDFMVVDAVTQNVFFSPELIRRLADRHLGVGFDQLLVVEPPYDPELDFHYRIFNADGSEVAQCGNGARCFARFVRLKGLTNKRDIRVSTANGRMVLTVTDDDLVRVNMGEPNFEPSAVPFRANKAEKTYIMRAAEQTILCGVVSMGNPHCVIQVDDVDTAAVETLGPVLESHERFPERANIGFMQVVKREHIRLRVYERGAGETQACGSGACAAVAVGIQQGLLAEEVRVELPGGRLDIAWKGPGHPLYMTGPAVHVYDGFIHL</sequence>
<keyword id="KW-0028">Amino-acid biosynthesis</keyword>
<keyword id="KW-0963">Cytoplasm</keyword>
<keyword id="KW-0413">Isomerase</keyword>
<keyword id="KW-0457">Lysine biosynthesis</keyword>